<sequence length="260" mass="29032">MKVRTLTAIIALLIFLPILLMGGTTLMLFAYLLALIALKELLNMNMIKLISVPGIFSALALIIIMLPQSAGDWVSNIQLKSLIAMSFILLSYTVLSKNRFSFMDAAFCLMSVAYVGIGFMYFYATRSDGLHYILYAFLVVWLTDTGAYIFGRLMGKHKLWPVISPNKTIEGFIGGLICSLIVPIVMLFFVDFNLNIWLLLLVTIILSIFGQLGDLVESGFKRHFGVKDSGRILPGHGGILDRFDSFMFVLPLLNILLIQM</sequence>
<protein>
    <recommendedName>
        <fullName>Phosphatidate cytidylyltransferase</fullName>
        <ecNumber>2.7.7.41</ecNumber>
    </recommendedName>
    <alternativeName>
        <fullName>CDP-DAG synthase</fullName>
    </alternativeName>
    <alternativeName>
        <fullName>CDP-DG synthase</fullName>
    </alternativeName>
    <alternativeName>
        <fullName>CDP-diacylglycerol synthase</fullName>
        <shortName>CDS</shortName>
    </alternativeName>
    <alternativeName>
        <fullName>CDP-diglyceride pyrophosphorylase</fullName>
    </alternativeName>
    <alternativeName>
        <fullName>CDP-diglyceride synthase</fullName>
    </alternativeName>
    <alternativeName>
        <fullName>CTP:phosphatidate cytidylyltransferase</fullName>
    </alternativeName>
</protein>
<dbReference type="EC" id="2.7.7.41"/>
<dbReference type="EMBL" id="AP006716">
    <property type="protein sequence ID" value="BAE04962.1"/>
    <property type="molecule type" value="Genomic_DNA"/>
</dbReference>
<dbReference type="RefSeq" id="WP_011275939.1">
    <property type="nucleotide sequence ID" value="NC_007168.1"/>
</dbReference>
<dbReference type="SMR" id="Q4L5W3"/>
<dbReference type="KEGG" id="sha:SH1653"/>
<dbReference type="eggNOG" id="COG4589">
    <property type="taxonomic scope" value="Bacteria"/>
</dbReference>
<dbReference type="HOGENOM" id="CLU_037294_2_2_9"/>
<dbReference type="OrthoDB" id="9799199at2"/>
<dbReference type="UniPathway" id="UPA00557">
    <property type="reaction ID" value="UER00614"/>
</dbReference>
<dbReference type="Proteomes" id="UP000000543">
    <property type="component" value="Chromosome"/>
</dbReference>
<dbReference type="GO" id="GO:0005886">
    <property type="term" value="C:plasma membrane"/>
    <property type="evidence" value="ECO:0007669"/>
    <property type="project" value="UniProtKB-SubCell"/>
</dbReference>
<dbReference type="GO" id="GO:0004605">
    <property type="term" value="F:phosphatidate cytidylyltransferase activity"/>
    <property type="evidence" value="ECO:0007669"/>
    <property type="project" value="UniProtKB-EC"/>
</dbReference>
<dbReference type="GO" id="GO:0016024">
    <property type="term" value="P:CDP-diacylglycerol biosynthetic process"/>
    <property type="evidence" value="ECO:0007669"/>
    <property type="project" value="UniProtKB-UniPathway"/>
</dbReference>
<dbReference type="InterPro" id="IPR000374">
    <property type="entry name" value="PC_trans"/>
</dbReference>
<dbReference type="PANTHER" id="PTHR46382">
    <property type="entry name" value="PHOSPHATIDATE CYTIDYLYLTRANSFERASE"/>
    <property type="match status" value="1"/>
</dbReference>
<dbReference type="PANTHER" id="PTHR46382:SF1">
    <property type="entry name" value="PHOSPHATIDATE CYTIDYLYLTRANSFERASE"/>
    <property type="match status" value="1"/>
</dbReference>
<dbReference type="Pfam" id="PF01148">
    <property type="entry name" value="CTP_transf_1"/>
    <property type="match status" value="1"/>
</dbReference>
<dbReference type="PROSITE" id="PS01315">
    <property type="entry name" value="CDS"/>
    <property type="match status" value="1"/>
</dbReference>
<proteinExistence type="inferred from homology"/>
<keyword id="KW-1003">Cell membrane</keyword>
<keyword id="KW-0444">Lipid biosynthesis</keyword>
<keyword id="KW-0443">Lipid metabolism</keyword>
<keyword id="KW-0472">Membrane</keyword>
<keyword id="KW-0548">Nucleotidyltransferase</keyword>
<keyword id="KW-0594">Phospholipid biosynthesis</keyword>
<keyword id="KW-1208">Phospholipid metabolism</keyword>
<keyword id="KW-0808">Transferase</keyword>
<keyword id="KW-0812">Transmembrane</keyword>
<keyword id="KW-1133">Transmembrane helix</keyword>
<reference key="1">
    <citation type="journal article" date="2005" name="J. Bacteriol.">
        <title>Whole-genome sequencing of Staphylococcus haemolyticus uncovers the extreme plasticity of its genome and the evolution of human-colonizing staphylococcal species.</title>
        <authorList>
            <person name="Takeuchi F."/>
            <person name="Watanabe S."/>
            <person name="Baba T."/>
            <person name="Yuzawa H."/>
            <person name="Ito T."/>
            <person name="Morimoto Y."/>
            <person name="Kuroda M."/>
            <person name="Cui L."/>
            <person name="Takahashi M."/>
            <person name="Ankai A."/>
            <person name="Baba S."/>
            <person name="Fukui S."/>
            <person name="Lee J.C."/>
            <person name="Hiramatsu K."/>
        </authorList>
    </citation>
    <scope>NUCLEOTIDE SEQUENCE [LARGE SCALE GENOMIC DNA]</scope>
    <source>
        <strain>JCSC1435</strain>
    </source>
</reference>
<gene>
    <name type="primary">cdsA</name>
    <name type="ordered locus">SH1653</name>
</gene>
<feature type="chain" id="PRO_0000090755" description="Phosphatidate cytidylyltransferase">
    <location>
        <begin position="1"/>
        <end position="260"/>
    </location>
</feature>
<feature type="transmembrane region" description="Helical" evidence="2">
    <location>
        <begin position="9"/>
        <end position="29"/>
    </location>
</feature>
<feature type="transmembrane region" description="Helical" evidence="2">
    <location>
        <begin position="46"/>
        <end position="66"/>
    </location>
</feature>
<feature type="transmembrane region" description="Helical" evidence="2">
    <location>
        <begin position="70"/>
        <end position="90"/>
    </location>
</feature>
<feature type="transmembrane region" description="Helical" evidence="2">
    <location>
        <begin position="102"/>
        <end position="122"/>
    </location>
</feature>
<feature type="transmembrane region" description="Helical" evidence="2">
    <location>
        <begin position="130"/>
        <end position="150"/>
    </location>
</feature>
<feature type="transmembrane region" description="Helical" evidence="2">
    <location>
        <begin position="172"/>
        <end position="192"/>
    </location>
</feature>
<feature type="transmembrane region" description="Helical" evidence="2">
    <location>
        <begin position="196"/>
        <end position="216"/>
    </location>
</feature>
<accession>Q4L5W3</accession>
<organism>
    <name type="scientific">Staphylococcus haemolyticus (strain JCSC1435)</name>
    <dbReference type="NCBI Taxonomy" id="279808"/>
    <lineage>
        <taxon>Bacteria</taxon>
        <taxon>Bacillati</taxon>
        <taxon>Bacillota</taxon>
        <taxon>Bacilli</taxon>
        <taxon>Bacillales</taxon>
        <taxon>Staphylococcaceae</taxon>
        <taxon>Staphylococcus</taxon>
    </lineage>
</organism>
<comment type="catalytic activity">
    <reaction>
        <text>a 1,2-diacyl-sn-glycero-3-phosphate + CTP + H(+) = a CDP-1,2-diacyl-sn-glycerol + diphosphate</text>
        <dbReference type="Rhea" id="RHEA:16229"/>
        <dbReference type="ChEBI" id="CHEBI:15378"/>
        <dbReference type="ChEBI" id="CHEBI:33019"/>
        <dbReference type="ChEBI" id="CHEBI:37563"/>
        <dbReference type="ChEBI" id="CHEBI:58332"/>
        <dbReference type="ChEBI" id="CHEBI:58608"/>
        <dbReference type="EC" id="2.7.7.41"/>
    </reaction>
</comment>
<comment type="pathway">
    <text>Phospholipid metabolism; CDP-diacylglycerol biosynthesis; CDP-diacylglycerol from sn-glycerol 3-phosphate: step 3/3.</text>
</comment>
<comment type="subcellular location">
    <subcellularLocation>
        <location evidence="1">Cell membrane</location>
        <topology evidence="1">Multi-pass membrane protein</topology>
    </subcellularLocation>
</comment>
<comment type="similarity">
    <text evidence="3">Belongs to the CDS family.</text>
</comment>
<name>CDSA_STAHJ</name>
<evidence type="ECO:0000250" key="1"/>
<evidence type="ECO:0000255" key="2"/>
<evidence type="ECO:0000305" key="3"/>